<evidence type="ECO:0000250" key="1"/>
<evidence type="ECO:0000255" key="2"/>
<evidence type="ECO:0000305" key="3"/>
<reference key="1">
    <citation type="journal article" date="2000" name="Nature">
        <title>Sequence and analysis of chromosome 1 of the plant Arabidopsis thaliana.</title>
        <authorList>
            <person name="Theologis A."/>
            <person name="Ecker J.R."/>
            <person name="Palm C.J."/>
            <person name="Federspiel N.A."/>
            <person name="Kaul S."/>
            <person name="White O."/>
            <person name="Alonso J."/>
            <person name="Altafi H."/>
            <person name="Araujo R."/>
            <person name="Bowman C.L."/>
            <person name="Brooks S.Y."/>
            <person name="Buehler E."/>
            <person name="Chan A."/>
            <person name="Chao Q."/>
            <person name="Chen H."/>
            <person name="Cheuk R.F."/>
            <person name="Chin C.W."/>
            <person name="Chung M.K."/>
            <person name="Conn L."/>
            <person name="Conway A.B."/>
            <person name="Conway A.R."/>
            <person name="Creasy T.H."/>
            <person name="Dewar K."/>
            <person name="Dunn P."/>
            <person name="Etgu P."/>
            <person name="Feldblyum T.V."/>
            <person name="Feng J.-D."/>
            <person name="Fong B."/>
            <person name="Fujii C.Y."/>
            <person name="Gill J.E."/>
            <person name="Goldsmith A.D."/>
            <person name="Haas B."/>
            <person name="Hansen N.F."/>
            <person name="Hughes B."/>
            <person name="Huizar L."/>
            <person name="Hunter J.L."/>
            <person name="Jenkins J."/>
            <person name="Johnson-Hopson C."/>
            <person name="Khan S."/>
            <person name="Khaykin E."/>
            <person name="Kim C.J."/>
            <person name="Koo H.L."/>
            <person name="Kremenetskaia I."/>
            <person name="Kurtz D.B."/>
            <person name="Kwan A."/>
            <person name="Lam B."/>
            <person name="Langin-Hooper S."/>
            <person name="Lee A."/>
            <person name="Lee J.M."/>
            <person name="Lenz C.A."/>
            <person name="Li J.H."/>
            <person name="Li Y.-P."/>
            <person name="Lin X."/>
            <person name="Liu S.X."/>
            <person name="Liu Z.A."/>
            <person name="Luros J.S."/>
            <person name="Maiti R."/>
            <person name="Marziali A."/>
            <person name="Militscher J."/>
            <person name="Miranda M."/>
            <person name="Nguyen M."/>
            <person name="Nierman W.C."/>
            <person name="Osborne B.I."/>
            <person name="Pai G."/>
            <person name="Peterson J."/>
            <person name="Pham P.K."/>
            <person name="Rizzo M."/>
            <person name="Rooney T."/>
            <person name="Rowley D."/>
            <person name="Sakano H."/>
            <person name="Salzberg S.L."/>
            <person name="Schwartz J.R."/>
            <person name="Shinn P."/>
            <person name="Southwick A.M."/>
            <person name="Sun H."/>
            <person name="Tallon L.J."/>
            <person name="Tambunga G."/>
            <person name="Toriumi M.J."/>
            <person name="Town C.D."/>
            <person name="Utterback T."/>
            <person name="Van Aken S."/>
            <person name="Vaysberg M."/>
            <person name="Vysotskaia V.S."/>
            <person name="Walker M."/>
            <person name="Wu D."/>
            <person name="Yu G."/>
            <person name="Fraser C.M."/>
            <person name="Venter J.C."/>
            <person name="Davis R.W."/>
        </authorList>
    </citation>
    <scope>NUCLEOTIDE SEQUENCE [LARGE SCALE GENOMIC DNA]</scope>
    <source>
        <strain>cv. Columbia</strain>
    </source>
</reference>
<reference key="2">
    <citation type="journal article" date="2017" name="Plant J.">
        <title>Araport11: a complete reannotation of the Arabidopsis thaliana reference genome.</title>
        <authorList>
            <person name="Cheng C.Y."/>
            <person name="Krishnakumar V."/>
            <person name="Chan A.P."/>
            <person name="Thibaud-Nissen F."/>
            <person name="Schobel S."/>
            <person name="Town C.D."/>
        </authorList>
    </citation>
    <scope>GENOME REANNOTATION</scope>
    <source>
        <strain>cv. Columbia</strain>
    </source>
</reference>
<dbReference type="EMBL" id="AC025417">
    <property type="protein sequence ID" value="AAF88082.1"/>
    <property type="status" value="ALT_SEQ"/>
    <property type="molecule type" value="Genomic_DNA"/>
</dbReference>
<dbReference type="EMBL" id="CP002684">
    <property type="status" value="NOT_ANNOTATED_CDS"/>
    <property type="molecule type" value="Genomic_DNA"/>
</dbReference>
<dbReference type="PaxDb" id="3702-AT1G12660.1"/>
<dbReference type="Araport" id="AT1G12660"/>
<dbReference type="TAIR" id="AT1G12660"/>
<dbReference type="HOGENOM" id="CLU_1867933_0_0_1"/>
<dbReference type="InParanoid" id="F4IDU9"/>
<dbReference type="PRO" id="PR:F4IDU9"/>
<dbReference type="Proteomes" id="UP000006548">
    <property type="component" value="Chromosome 1"/>
</dbReference>
<dbReference type="ExpressionAtlas" id="F4IDU9">
    <property type="expression patterns" value="baseline and differential"/>
</dbReference>
<dbReference type="GO" id="GO:0005576">
    <property type="term" value="C:extracellular region"/>
    <property type="evidence" value="ECO:0007669"/>
    <property type="project" value="UniProtKB-SubCell"/>
</dbReference>
<dbReference type="GO" id="GO:0006952">
    <property type="term" value="P:defense response"/>
    <property type="evidence" value="ECO:0000250"/>
    <property type="project" value="TAIR"/>
</dbReference>
<dbReference type="InterPro" id="IPR038975">
    <property type="entry name" value="THNL"/>
</dbReference>
<dbReference type="PANTHER" id="PTHR36312">
    <property type="entry name" value="THIONIN-LIKE PROTEIN 1"/>
    <property type="match status" value="1"/>
</dbReference>
<dbReference type="PANTHER" id="PTHR36312:SF9">
    <property type="entry name" value="THIONIN-LIKE PROTEIN 1"/>
    <property type="match status" value="1"/>
</dbReference>
<feature type="signal peptide" evidence="2">
    <location>
        <begin position="1"/>
        <end position="23"/>
    </location>
</feature>
<feature type="chain" id="PRO_0000415904" description="Thionin-like protein 1">
    <location>
        <begin position="24"/>
        <end position="137"/>
    </location>
</feature>
<proteinExistence type="inferred from homology"/>
<gene>
    <name type="ordered locus">At1g12660</name>
    <name type="ORF">T12C24.19</name>
</gene>
<keyword id="KW-1015">Disulfide bond</keyword>
<keyword id="KW-0611">Plant defense</keyword>
<keyword id="KW-1185">Reference proteome</keyword>
<keyword id="KW-0964">Secreted</keyword>
<keyword id="KW-0732">Signal</keyword>
<sequence length="137" mass="15427">MEDKRVAMLVVMMLVMGNMLIEAEAVMSFKLCYGGCLVACALIAPPIKKLFCPFLCIKDCKRRPMLSFEANLNEIDQTGSYCELGCATDRCVSSSSIDDKGYYVNFSGIMWRKFHYAWIHAQKSAPTRTKIAIDFSL</sequence>
<comment type="function">
    <text evidence="1">May be involved in plant defense.</text>
</comment>
<comment type="subcellular location">
    <subcellularLocation>
        <location evidence="3">Secreted</location>
    </subcellularLocation>
</comment>
<comment type="PTM">
    <text evidence="3">Is disulfide-linked.</text>
</comment>
<comment type="similarity">
    <text evidence="3">Belongs to the plant thionin (TC 1.C.44) family.</text>
</comment>
<comment type="sequence caution" evidence="3">
    <conflict type="erroneous gene model prediction">
        <sequence resource="EMBL-CDS" id="AAF88082"/>
    </conflict>
    <text>The predicted gene At1g12660 has been split into 2 genes: At1g12660 and At1g12663.</text>
</comment>
<protein>
    <recommendedName>
        <fullName>Thionin-like protein 1</fullName>
    </recommendedName>
</protein>
<accession>F4IDU9</accession>
<accession>Q9LN81</accession>
<name>THNL1_ARATH</name>
<organism>
    <name type="scientific">Arabidopsis thaliana</name>
    <name type="common">Mouse-ear cress</name>
    <dbReference type="NCBI Taxonomy" id="3702"/>
    <lineage>
        <taxon>Eukaryota</taxon>
        <taxon>Viridiplantae</taxon>
        <taxon>Streptophyta</taxon>
        <taxon>Embryophyta</taxon>
        <taxon>Tracheophyta</taxon>
        <taxon>Spermatophyta</taxon>
        <taxon>Magnoliopsida</taxon>
        <taxon>eudicotyledons</taxon>
        <taxon>Gunneridae</taxon>
        <taxon>Pentapetalae</taxon>
        <taxon>rosids</taxon>
        <taxon>malvids</taxon>
        <taxon>Brassicales</taxon>
        <taxon>Brassicaceae</taxon>
        <taxon>Camelineae</taxon>
        <taxon>Arabidopsis</taxon>
    </lineage>
</organism>